<organism>
    <name type="scientific">Cyphononyx dorsalis</name>
    <name type="common">Spider wasp</name>
    <name type="synonym">Cyphononyx fulvognathus</name>
    <dbReference type="NCBI Taxonomy" id="246266"/>
    <lineage>
        <taxon>Eukaryota</taxon>
        <taxon>Metazoa</taxon>
        <taxon>Ecdysozoa</taxon>
        <taxon>Arthropoda</taxon>
        <taxon>Hexapoda</taxon>
        <taxon>Insecta</taxon>
        <taxon>Pterygota</taxon>
        <taxon>Neoptera</taxon>
        <taxon>Endopterygota</taxon>
        <taxon>Hymenoptera</taxon>
        <taxon>Apocrita</taxon>
        <taxon>Aculeata</taxon>
        <taxon>Pompiloidea</taxon>
        <taxon>Pompilidae</taxon>
        <taxon>Pepsinae</taxon>
        <taxon>Cyphononyx</taxon>
    </lineage>
</organism>
<sequence length="8" mass="1026">DTARLQWH</sequence>
<dbReference type="GO" id="GO:0005615">
    <property type="term" value="C:extracellular space"/>
    <property type="evidence" value="ECO:0000314"/>
    <property type="project" value="UniProtKB"/>
</dbReference>
<keyword id="KW-0903">Direct protein sequencing</keyword>
<keyword id="KW-0964">Secreted</keyword>
<name>C125_CYPDO</name>
<protein>
    <recommendedName>
        <fullName evidence="2">Peptide Cd-125</fullName>
    </recommendedName>
</protein>
<reference key="1">
    <citation type="journal article" date="2001" name="Toxicon">
        <title>Isolation and sequence determination of peptides in the venom of the spider wasp (Cyphononyx dorsalis) guided by matrix-assisted laser desorption/ionization time of flight (MALDI-TOF) mass spectrometry.</title>
        <authorList>
            <person name="Konno K."/>
            <person name="Hisada M."/>
            <person name="Naoki H."/>
            <person name="Itagaki Y."/>
            <person name="Yasuhara T."/>
            <person name="Juliano M.A."/>
            <person name="Juliano L."/>
            <person name="Palma M.S."/>
            <person name="Yamane T."/>
            <person name="Nakajima T."/>
        </authorList>
    </citation>
    <scope>PROTEIN SEQUENCE</scope>
    <scope>SUBCELLULAR LOCATION</scope>
    <scope>MASS SPECTROMETRY</scope>
    <source>
        <tissue>Venom</tissue>
    </source>
</reference>
<reference key="2">
    <citation type="journal article" date="2016" name="Toxins">
        <title>Peptide toxins in solitary wasp venoms.</title>
        <authorList>
            <person name="Konno K."/>
            <person name="Kazuma K."/>
            <person name="Nihei K."/>
        </authorList>
    </citation>
    <scope>REVIEW</scope>
</reference>
<feature type="peptide" id="PRO_0000044111" description="Peptide Cd-125" evidence="1">
    <location>
        <begin position="1"/>
        <end position="8"/>
    </location>
</feature>
<accession>P83661</accession>
<proteinExistence type="evidence at protein level"/>
<comment type="subcellular location">
    <subcellularLocation>
        <location evidence="1">Secreted</location>
    </subcellularLocation>
</comment>
<comment type="tissue specificity">
    <text evidence="3">Expressed by the venom gland.</text>
</comment>
<comment type="mass spectrometry" mass="1026.55" method="MALDI" evidence="1"/>
<comment type="miscellaneous">
    <text evidence="4">Is a major component of C.dorsalis venom.</text>
</comment>
<evidence type="ECO:0000269" key="1">
    <source>
    </source>
</evidence>
<evidence type="ECO:0000303" key="2">
    <source>
    </source>
</evidence>
<evidence type="ECO:0000305" key="3">
    <source>
    </source>
</evidence>
<evidence type="ECO:0000305" key="4">
    <source>
    </source>
</evidence>